<organism>
    <name type="scientific">Cronobacter sakazakii (strain ATCC BAA-894)</name>
    <name type="common">Enterobacter sakazakii</name>
    <dbReference type="NCBI Taxonomy" id="290339"/>
    <lineage>
        <taxon>Bacteria</taxon>
        <taxon>Pseudomonadati</taxon>
        <taxon>Pseudomonadota</taxon>
        <taxon>Gammaproteobacteria</taxon>
        <taxon>Enterobacterales</taxon>
        <taxon>Enterobacteriaceae</taxon>
        <taxon>Cronobacter</taxon>
    </lineage>
</organism>
<protein>
    <recommendedName>
        <fullName evidence="1">Large ribosomal subunit protein bL36A</fullName>
    </recommendedName>
    <alternativeName>
        <fullName evidence="2">50S ribosomal protein L36 1</fullName>
    </alternativeName>
</protein>
<evidence type="ECO:0000255" key="1">
    <source>
        <dbReference type="HAMAP-Rule" id="MF_00251"/>
    </source>
</evidence>
<evidence type="ECO:0000305" key="2"/>
<comment type="similarity">
    <text evidence="1">Belongs to the bacterial ribosomal protein bL36 family.</text>
</comment>
<keyword id="KW-1185">Reference proteome</keyword>
<keyword id="KW-0687">Ribonucleoprotein</keyword>
<keyword id="KW-0689">Ribosomal protein</keyword>
<feature type="chain" id="PRO_0000344664" description="Large ribosomal subunit protein bL36A">
    <location>
        <begin position="1"/>
        <end position="38"/>
    </location>
</feature>
<proteinExistence type="inferred from homology"/>
<gene>
    <name evidence="1" type="primary">rpmJ1</name>
    <name type="ordered locus">ESA_00028</name>
</gene>
<dbReference type="EMBL" id="CP000783">
    <property type="protein sequence ID" value="ABU75337.1"/>
    <property type="molecule type" value="Genomic_DNA"/>
</dbReference>
<dbReference type="SMR" id="A7MPF5"/>
<dbReference type="KEGG" id="esa:ESA_00028"/>
<dbReference type="HOGENOM" id="CLU_135723_6_2_6"/>
<dbReference type="Proteomes" id="UP000000260">
    <property type="component" value="Chromosome"/>
</dbReference>
<dbReference type="GO" id="GO:0005737">
    <property type="term" value="C:cytoplasm"/>
    <property type="evidence" value="ECO:0007669"/>
    <property type="project" value="UniProtKB-ARBA"/>
</dbReference>
<dbReference type="GO" id="GO:1990904">
    <property type="term" value="C:ribonucleoprotein complex"/>
    <property type="evidence" value="ECO:0007669"/>
    <property type="project" value="UniProtKB-KW"/>
</dbReference>
<dbReference type="GO" id="GO:0005840">
    <property type="term" value="C:ribosome"/>
    <property type="evidence" value="ECO:0007669"/>
    <property type="project" value="UniProtKB-KW"/>
</dbReference>
<dbReference type="GO" id="GO:0003735">
    <property type="term" value="F:structural constituent of ribosome"/>
    <property type="evidence" value="ECO:0007669"/>
    <property type="project" value="InterPro"/>
</dbReference>
<dbReference type="GO" id="GO:0006412">
    <property type="term" value="P:translation"/>
    <property type="evidence" value="ECO:0007669"/>
    <property type="project" value="UniProtKB-UniRule"/>
</dbReference>
<dbReference type="HAMAP" id="MF_00251">
    <property type="entry name" value="Ribosomal_bL36"/>
    <property type="match status" value="1"/>
</dbReference>
<dbReference type="InterPro" id="IPR000473">
    <property type="entry name" value="Ribosomal_bL36"/>
</dbReference>
<dbReference type="InterPro" id="IPR035977">
    <property type="entry name" value="Ribosomal_bL36_sp"/>
</dbReference>
<dbReference type="NCBIfam" id="TIGR01022">
    <property type="entry name" value="rpmJ_bact"/>
    <property type="match status" value="1"/>
</dbReference>
<dbReference type="PANTHER" id="PTHR42888">
    <property type="entry name" value="50S RIBOSOMAL PROTEIN L36, CHLOROPLASTIC"/>
    <property type="match status" value="1"/>
</dbReference>
<dbReference type="PANTHER" id="PTHR42888:SF1">
    <property type="entry name" value="LARGE RIBOSOMAL SUBUNIT PROTEIN BL36C"/>
    <property type="match status" value="1"/>
</dbReference>
<dbReference type="Pfam" id="PF00444">
    <property type="entry name" value="Ribosomal_L36"/>
    <property type="match status" value="1"/>
</dbReference>
<dbReference type="SUPFAM" id="SSF57840">
    <property type="entry name" value="Ribosomal protein L36"/>
    <property type="match status" value="1"/>
</dbReference>
<dbReference type="PROSITE" id="PS00828">
    <property type="entry name" value="RIBOSOMAL_L36"/>
    <property type="match status" value="1"/>
</dbReference>
<reference key="1">
    <citation type="journal article" date="2010" name="PLoS ONE">
        <title>Genome sequence of Cronobacter sakazakii BAA-894 and comparative genomic hybridization analysis with other Cronobacter species.</title>
        <authorList>
            <person name="Kucerova E."/>
            <person name="Clifton S.W."/>
            <person name="Xia X.Q."/>
            <person name="Long F."/>
            <person name="Porwollik S."/>
            <person name="Fulton L."/>
            <person name="Fronick C."/>
            <person name="Minx P."/>
            <person name="Kyung K."/>
            <person name="Warren W."/>
            <person name="Fulton R."/>
            <person name="Feng D."/>
            <person name="Wollam A."/>
            <person name="Shah N."/>
            <person name="Bhonagiri V."/>
            <person name="Nash W.E."/>
            <person name="Hallsworth-Pepin K."/>
            <person name="Wilson R.K."/>
            <person name="McClelland M."/>
            <person name="Forsythe S.J."/>
        </authorList>
    </citation>
    <scope>NUCLEOTIDE SEQUENCE [LARGE SCALE GENOMIC DNA]</scope>
    <source>
        <strain>ATCC BAA-894</strain>
    </source>
</reference>
<accession>A7MPF5</accession>
<sequence>MKVRASVKKLCRNCKIVKRDGVIRVICSAEPKHKQRQG</sequence>
<name>RL361_CROS8</name>